<keyword id="KW-0456">Lyase</keyword>
<keyword id="KW-0501">Molybdenum cofactor biosynthesis</keyword>
<name>MOAC_CAMJR</name>
<evidence type="ECO:0000255" key="1">
    <source>
        <dbReference type="HAMAP-Rule" id="MF_01224"/>
    </source>
</evidence>
<organism>
    <name type="scientific">Campylobacter jejuni (strain RM1221)</name>
    <dbReference type="NCBI Taxonomy" id="195099"/>
    <lineage>
        <taxon>Bacteria</taxon>
        <taxon>Pseudomonadati</taxon>
        <taxon>Campylobacterota</taxon>
        <taxon>Epsilonproteobacteria</taxon>
        <taxon>Campylobacterales</taxon>
        <taxon>Campylobacteraceae</taxon>
        <taxon>Campylobacter</taxon>
    </lineage>
</organism>
<sequence length="157" mass="17150">MKLSHLDEKNHPKMVDVSDKNITSRIATASGMIYMSQEAFDVIKNNTAKKGPVLQTAIIAAIMGAKKTSEIIPMCHPLMLSKVETNIVEFVKECAFKLIVTVKCEGKTGVEMEALSGVSIGLLTIYDMIKAIDKSMRITDIVLESKEGGKSGKFVRS</sequence>
<feature type="chain" id="PRO_1000054083" description="Cyclic pyranopterin monophosphate synthase">
    <location>
        <begin position="1"/>
        <end position="157"/>
    </location>
</feature>
<feature type="active site" evidence="1">
    <location>
        <position position="127"/>
    </location>
</feature>
<feature type="binding site" evidence="1">
    <location>
        <begin position="74"/>
        <end position="76"/>
    </location>
    <ligand>
        <name>substrate</name>
    </ligand>
</feature>
<feature type="binding site" evidence="1">
    <location>
        <begin position="112"/>
        <end position="113"/>
    </location>
    <ligand>
        <name>substrate</name>
    </ligand>
</feature>
<reference key="1">
    <citation type="journal article" date="2005" name="PLoS Biol.">
        <title>Major structural differences and novel potential virulence mechanisms from the genomes of multiple Campylobacter species.</title>
        <authorList>
            <person name="Fouts D.E."/>
            <person name="Mongodin E.F."/>
            <person name="Mandrell R.E."/>
            <person name="Miller W.G."/>
            <person name="Rasko D.A."/>
            <person name="Ravel J."/>
            <person name="Brinkac L.M."/>
            <person name="DeBoy R.T."/>
            <person name="Parker C.T."/>
            <person name="Daugherty S.C."/>
            <person name="Dodson R.J."/>
            <person name="Durkin A.S."/>
            <person name="Madupu R."/>
            <person name="Sullivan S.A."/>
            <person name="Shetty J.U."/>
            <person name="Ayodeji M.A."/>
            <person name="Shvartsbeyn A."/>
            <person name="Schatz M.C."/>
            <person name="Badger J.H."/>
            <person name="Fraser C.M."/>
            <person name="Nelson K.E."/>
        </authorList>
    </citation>
    <scope>NUCLEOTIDE SEQUENCE [LARGE SCALE GENOMIC DNA]</scope>
    <source>
        <strain>RM1221</strain>
    </source>
</reference>
<gene>
    <name evidence="1" type="primary">moaC</name>
    <name type="ordered locus">CJE0302</name>
</gene>
<dbReference type="EC" id="4.6.1.17" evidence="1"/>
<dbReference type="EMBL" id="CP000025">
    <property type="protein sequence ID" value="AAW34892.1"/>
    <property type="molecule type" value="Genomic_DNA"/>
</dbReference>
<dbReference type="RefSeq" id="WP_002865819.1">
    <property type="nucleotide sequence ID" value="NC_003912.7"/>
</dbReference>
<dbReference type="SMR" id="Q5HWL3"/>
<dbReference type="KEGG" id="cjr:CJE0302"/>
<dbReference type="HOGENOM" id="CLU_074693_1_1_7"/>
<dbReference type="UniPathway" id="UPA00344"/>
<dbReference type="GO" id="GO:0061799">
    <property type="term" value="F:cyclic pyranopterin monophosphate synthase activity"/>
    <property type="evidence" value="ECO:0007669"/>
    <property type="project" value="UniProtKB-UniRule"/>
</dbReference>
<dbReference type="GO" id="GO:0061798">
    <property type="term" value="F:GTP 3',8'-cyclase activity"/>
    <property type="evidence" value="ECO:0007669"/>
    <property type="project" value="TreeGrafter"/>
</dbReference>
<dbReference type="GO" id="GO:0006777">
    <property type="term" value="P:Mo-molybdopterin cofactor biosynthetic process"/>
    <property type="evidence" value="ECO:0007669"/>
    <property type="project" value="UniProtKB-UniRule"/>
</dbReference>
<dbReference type="CDD" id="cd01420">
    <property type="entry name" value="MoaC_PE"/>
    <property type="match status" value="1"/>
</dbReference>
<dbReference type="Gene3D" id="3.30.70.640">
    <property type="entry name" value="Molybdopterin cofactor biosynthesis C (MoaC) domain"/>
    <property type="match status" value="1"/>
</dbReference>
<dbReference type="HAMAP" id="MF_01224_B">
    <property type="entry name" value="MoaC_B"/>
    <property type="match status" value="1"/>
</dbReference>
<dbReference type="InterPro" id="IPR023045">
    <property type="entry name" value="MoaC"/>
</dbReference>
<dbReference type="InterPro" id="IPR047594">
    <property type="entry name" value="MoaC_bact/euk"/>
</dbReference>
<dbReference type="InterPro" id="IPR036522">
    <property type="entry name" value="MoaC_sf"/>
</dbReference>
<dbReference type="InterPro" id="IPR050105">
    <property type="entry name" value="MoCo_biosynth_MoaA/MoaC"/>
</dbReference>
<dbReference type="InterPro" id="IPR002820">
    <property type="entry name" value="Mopterin_CF_biosynth-C_dom"/>
</dbReference>
<dbReference type="NCBIfam" id="TIGR00581">
    <property type="entry name" value="moaC"/>
    <property type="match status" value="1"/>
</dbReference>
<dbReference type="NCBIfam" id="NF006870">
    <property type="entry name" value="PRK09364.1"/>
    <property type="match status" value="1"/>
</dbReference>
<dbReference type="PANTHER" id="PTHR22960:SF0">
    <property type="entry name" value="MOLYBDENUM COFACTOR BIOSYNTHESIS PROTEIN 1"/>
    <property type="match status" value="1"/>
</dbReference>
<dbReference type="PANTHER" id="PTHR22960">
    <property type="entry name" value="MOLYBDOPTERIN COFACTOR SYNTHESIS PROTEIN A"/>
    <property type="match status" value="1"/>
</dbReference>
<dbReference type="Pfam" id="PF01967">
    <property type="entry name" value="MoaC"/>
    <property type="match status" value="1"/>
</dbReference>
<dbReference type="SUPFAM" id="SSF55040">
    <property type="entry name" value="Molybdenum cofactor biosynthesis protein C, MoaC"/>
    <property type="match status" value="1"/>
</dbReference>
<protein>
    <recommendedName>
        <fullName evidence="1">Cyclic pyranopterin monophosphate synthase</fullName>
        <ecNumber evidence="1">4.6.1.17</ecNumber>
    </recommendedName>
    <alternativeName>
        <fullName evidence="1">Molybdenum cofactor biosynthesis protein C</fullName>
    </alternativeName>
</protein>
<comment type="function">
    <text evidence="1">Catalyzes the conversion of (8S)-3',8-cyclo-7,8-dihydroguanosine 5'-triphosphate to cyclic pyranopterin monophosphate (cPMP).</text>
</comment>
<comment type="catalytic activity">
    <reaction evidence="1">
        <text>(8S)-3',8-cyclo-7,8-dihydroguanosine 5'-triphosphate = cyclic pyranopterin phosphate + diphosphate</text>
        <dbReference type="Rhea" id="RHEA:49580"/>
        <dbReference type="ChEBI" id="CHEBI:33019"/>
        <dbReference type="ChEBI" id="CHEBI:59648"/>
        <dbReference type="ChEBI" id="CHEBI:131766"/>
        <dbReference type="EC" id="4.6.1.17"/>
    </reaction>
</comment>
<comment type="pathway">
    <text evidence="1">Cofactor biosynthesis; molybdopterin biosynthesis.</text>
</comment>
<comment type="subunit">
    <text evidence="1">Homohexamer; trimer of dimers.</text>
</comment>
<comment type="similarity">
    <text evidence="1">Belongs to the MoaC family.</text>
</comment>
<proteinExistence type="inferred from homology"/>
<accession>Q5HWL3</accession>